<proteinExistence type="inferred from homology"/>
<feature type="chain" id="PRO_1000005488" description="Large ribosomal subunit protein uL10">
    <location>
        <begin position="1"/>
        <end position="165"/>
    </location>
</feature>
<organism>
    <name type="scientific">Citrobacter koseri (strain ATCC BAA-895 / CDC 4225-83 / SGSC4696)</name>
    <dbReference type="NCBI Taxonomy" id="290338"/>
    <lineage>
        <taxon>Bacteria</taxon>
        <taxon>Pseudomonadati</taxon>
        <taxon>Pseudomonadota</taxon>
        <taxon>Gammaproteobacteria</taxon>
        <taxon>Enterobacterales</taxon>
        <taxon>Enterobacteriaceae</taxon>
        <taxon>Citrobacter</taxon>
    </lineage>
</organism>
<sequence>MALNLQDKQAIVAEVSEVAKGALSAVVADSRGVTVDKMTELRKAGREAGVYMRVVRNTLLRRVVEGTPFECLKDTFVGPTLIAYSMEHPGAAARLFKEFAKANAKFEVKAAAFEGELIPASQIDRLATLPTYEEAIARLMATMKEASAGKLVRTLAAVRDAKEAA</sequence>
<keyword id="KW-1185">Reference proteome</keyword>
<keyword id="KW-0687">Ribonucleoprotein</keyword>
<keyword id="KW-0689">Ribosomal protein</keyword>
<keyword id="KW-0694">RNA-binding</keyword>
<keyword id="KW-0699">rRNA-binding</keyword>
<dbReference type="EMBL" id="CP000822">
    <property type="protein sequence ID" value="ABV14104.1"/>
    <property type="molecule type" value="Genomic_DNA"/>
</dbReference>
<dbReference type="RefSeq" id="WP_004097644.1">
    <property type="nucleotide sequence ID" value="NC_009792.1"/>
</dbReference>
<dbReference type="STRING" id="290338.CKO_03004"/>
<dbReference type="GeneID" id="97397822"/>
<dbReference type="KEGG" id="cko:CKO_03004"/>
<dbReference type="HOGENOM" id="CLU_092227_0_2_6"/>
<dbReference type="OrthoDB" id="9808307at2"/>
<dbReference type="Proteomes" id="UP000008148">
    <property type="component" value="Chromosome"/>
</dbReference>
<dbReference type="GO" id="GO:0015934">
    <property type="term" value="C:large ribosomal subunit"/>
    <property type="evidence" value="ECO:0007669"/>
    <property type="project" value="InterPro"/>
</dbReference>
<dbReference type="GO" id="GO:0070180">
    <property type="term" value="F:large ribosomal subunit rRNA binding"/>
    <property type="evidence" value="ECO:0007669"/>
    <property type="project" value="UniProtKB-UniRule"/>
</dbReference>
<dbReference type="GO" id="GO:0003735">
    <property type="term" value="F:structural constituent of ribosome"/>
    <property type="evidence" value="ECO:0007669"/>
    <property type="project" value="InterPro"/>
</dbReference>
<dbReference type="GO" id="GO:0006412">
    <property type="term" value="P:translation"/>
    <property type="evidence" value="ECO:0007669"/>
    <property type="project" value="UniProtKB-UniRule"/>
</dbReference>
<dbReference type="CDD" id="cd05797">
    <property type="entry name" value="Ribosomal_L10"/>
    <property type="match status" value="1"/>
</dbReference>
<dbReference type="FunFam" id="3.30.70.1730:FF:000001">
    <property type="entry name" value="50S ribosomal protein L10"/>
    <property type="match status" value="1"/>
</dbReference>
<dbReference type="Gene3D" id="3.30.70.1730">
    <property type="match status" value="1"/>
</dbReference>
<dbReference type="Gene3D" id="6.10.250.2350">
    <property type="match status" value="1"/>
</dbReference>
<dbReference type="HAMAP" id="MF_00362">
    <property type="entry name" value="Ribosomal_uL10"/>
    <property type="match status" value="1"/>
</dbReference>
<dbReference type="InterPro" id="IPR001790">
    <property type="entry name" value="Ribosomal_uL10"/>
</dbReference>
<dbReference type="InterPro" id="IPR043141">
    <property type="entry name" value="Ribosomal_uL10-like_sf"/>
</dbReference>
<dbReference type="InterPro" id="IPR022973">
    <property type="entry name" value="Ribosomal_uL10_bac"/>
</dbReference>
<dbReference type="InterPro" id="IPR047865">
    <property type="entry name" value="Ribosomal_uL10_bac_type"/>
</dbReference>
<dbReference type="InterPro" id="IPR002363">
    <property type="entry name" value="Ribosomal_uL10_CS_bac"/>
</dbReference>
<dbReference type="NCBIfam" id="NF000955">
    <property type="entry name" value="PRK00099.1-1"/>
    <property type="match status" value="1"/>
</dbReference>
<dbReference type="PANTHER" id="PTHR11560">
    <property type="entry name" value="39S RIBOSOMAL PROTEIN L10, MITOCHONDRIAL"/>
    <property type="match status" value="1"/>
</dbReference>
<dbReference type="Pfam" id="PF00466">
    <property type="entry name" value="Ribosomal_L10"/>
    <property type="match status" value="1"/>
</dbReference>
<dbReference type="SUPFAM" id="SSF160369">
    <property type="entry name" value="Ribosomal protein L10-like"/>
    <property type="match status" value="1"/>
</dbReference>
<dbReference type="PROSITE" id="PS01109">
    <property type="entry name" value="RIBOSOMAL_L10"/>
    <property type="match status" value="1"/>
</dbReference>
<protein>
    <recommendedName>
        <fullName evidence="1">Large ribosomal subunit protein uL10</fullName>
    </recommendedName>
    <alternativeName>
        <fullName evidence="2">50S ribosomal protein L10</fullName>
    </alternativeName>
</protein>
<gene>
    <name evidence="1" type="primary">rplJ</name>
    <name type="ordered locus">CKO_03004</name>
</gene>
<evidence type="ECO:0000255" key="1">
    <source>
        <dbReference type="HAMAP-Rule" id="MF_00362"/>
    </source>
</evidence>
<evidence type="ECO:0000305" key="2"/>
<accession>A8AKU1</accession>
<comment type="function">
    <text evidence="1">Forms part of the ribosomal stalk, playing a central role in the interaction of the ribosome with GTP-bound translation factors.</text>
</comment>
<comment type="subunit">
    <text evidence="1">Part of the ribosomal stalk of the 50S ribosomal subunit. The N-terminus interacts with L11 and the large rRNA to form the base of the stalk. The C-terminus forms an elongated spine to which L12 dimers bind in a sequential fashion forming a multimeric L10(L12)X complex.</text>
</comment>
<comment type="similarity">
    <text evidence="1">Belongs to the universal ribosomal protein uL10 family.</text>
</comment>
<reference key="1">
    <citation type="submission" date="2007-08" db="EMBL/GenBank/DDBJ databases">
        <authorList>
            <consortium name="The Citrobacter koseri Genome Sequencing Project"/>
            <person name="McClelland M."/>
            <person name="Sanderson E.K."/>
            <person name="Porwollik S."/>
            <person name="Spieth J."/>
            <person name="Clifton W.S."/>
            <person name="Latreille P."/>
            <person name="Courtney L."/>
            <person name="Wang C."/>
            <person name="Pepin K."/>
            <person name="Bhonagiri V."/>
            <person name="Nash W."/>
            <person name="Johnson M."/>
            <person name="Thiruvilangam P."/>
            <person name="Wilson R."/>
        </authorList>
    </citation>
    <scope>NUCLEOTIDE SEQUENCE [LARGE SCALE GENOMIC DNA]</scope>
    <source>
        <strain>ATCC BAA-895 / CDC 4225-83 / SGSC4696</strain>
    </source>
</reference>
<name>RL10_CITK8</name>